<sequence length="160" mass="17413">MMVKAVKKKTVTKINKKTSAPAAVKIKSRRLSPLADIDPDNAVQVLNRLWEVVMQRRDADPAVSHSARLLSRGIGKVAQKFGEEAVECLIEAVSGDKEALIGESADVLYHLLVLWVAVGVEPAEVWRELTKREGISGIAEKASRAKILPRAAGLKTTKIP</sequence>
<dbReference type="EC" id="3.6.1.31" evidence="1"/>
<dbReference type="EMBL" id="CP000394">
    <property type="protein sequence ID" value="ABI63127.1"/>
    <property type="molecule type" value="Genomic_DNA"/>
</dbReference>
<dbReference type="RefSeq" id="WP_011632929.1">
    <property type="nucleotide sequence ID" value="NC_008343.2"/>
</dbReference>
<dbReference type="SMR" id="Q0BPX5"/>
<dbReference type="STRING" id="391165.GbCGDNIH1_2229"/>
<dbReference type="KEGG" id="gbe:GbCGDNIH1_2229"/>
<dbReference type="eggNOG" id="COG0140">
    <property type="taxonomic scope" value="Bacteria"/>
</dbReference>
<dbReference type="HOGENOM" id="CLU_123337_1_0_5"/>
<dbReference type="UniPathway" id="UPA00031">
    <property type="reaction ID" value="UER00007"/>
</dbReference>
<dbReference type="Proteomes" id="UP000001963">
    <property type="component" value="Chromosome"/>
</dbReference>
<dbReference type="GO" id="GO:0005737">
    <property type="term" value="C:cytoplasm"/>
    <property type="evidence" value="ECO:0007669"/>
    <property type="project" value="UniProtKB-SubCell"/>
</dbReference>
<dbReference type="GO" id="GO:0005524">
    <property type="term" value="F:ATP binding"/>
    <property type="evidence" value="ECO:0007669"/>
    <property type="project" value="UniProtKB-KW"/>
</dbReference>
<dbReference type="GO" id="GO:0004636">
    <property type="term" value="F:phosphoribosyl-ATP diphosphatase activity"/>
    <property type="evidence" value="ECO:0007669"/>
    <property type="project" value="UniProtKB-UniRule"/>
</dbReference>
<dbReference type="GO" id="GO:0000105">
    <property type="term" value="P:L-histidine biosynthetic process"/>
    <property type="evidence" value="ECO:0007669"/>
    <property type="project" value="UniProtKB-UniRule"/>
</dbReference>
<dbReference type="CDD" id="cd11534">
    <property type="entry name" value="NTP-PPase_HisIE_like"/>
    <property type="match status" value="1"/>
</dbReference>
<dbReference type="Gene3D" id="1.10.287.1080">
    <property type="entry name" value="MazG-like"/>
    <property type="match status" value="1"/>
</dbReference>
<dbReference type="HAMAP" id="MF_01020">
    <property type="entry name" value="HisE"/>
    <property type="match status" value="1"/>
</dbReference>
<dbReference type="InterPro" id="IPR008179">
    <property type="entry name" value="HisE"/>
</dbReference>
<dbReference type="InterPro" id="IPR021130">
    <property type="entry name" value="PRib-ATP_PPHydrolase-like"/>
</dbReference>
<dbReference type="NCBIfam" id="TIGR03188">
    <property type="entry name" value="histidine_hisI"/>
    <property type="match status" value="1"/>
</dbReference>
<dbReference type="NCBIfam" id="NF001613">
    <property type="entry name" value="PRK00400.1-5"/>
    <property type="match status" value="1"/>
</dbReference>
<dbReference type="PANTHER" id="PTHR42945">
    <property type="entry name" value="HISTIDINE BIOSYNTHESIS BIFUNCTIONAL PROTEIN"/>
    <property type="match status" value="1"/>
</dbReference>
<dbReference type="PANTHER" id="PTHR42945:SF1">
    <property type="entry name" value="HISTIDINE BIOSYNTHESIS BIFUNCTIONAL PROTEIN HIS7"/>
    <property type="match status" value="1"/>
</dbReference>
<dbReference type="Pfam" id="PF01503">
    <property type="entry name" value="PRA-PH"/>
    <property type="match status" value="1"/>
</dbReference>
<dbReference type="SUPFAM" id="SSF101386">
    <property type="entry name" value="all-alpha NTP pyrophosphatases"/>
    <property type="match status" value="1"/>
</dbReference>
<name>HIS2_GRABC</name>
<comment type="catalytic activity">
    <reaction evidence="1">
        <text>1-(5-phospho-beta-D-ribosyl)-ATP + H2O = 1-(5-phospho-beta-D-ribosyl)-5'-AMP + diphosphate + H(+)</text>
        <dbReference type="Rhea" id="RHEA:22828"/>
        <dbReference type="ChEBI" id="CHEBI:15377"/>
        <dbReference type="ChEBI" id="CHEBI:15378"/>
        <dbReference type="ChEBI" id="CHEBI:33019"/>
        <dbReference type="ChEBI" id="CHEBI:59457"/>
        <dbReference type="ChEBI" id="CHEBI:73183"/>
        <dbReference type="EC" id="3.6.1.31"/>
    </reaction>
</comment>
<comment type="pathway">
    <text evidence="1">Amino-acid biosynthesis; L-histidine biosynthesis; L-histidine from 5-phospho-alpha-D-ribose 1-diphosphate: step 2/9.</text>
</comment>
<comment type="subcellular location">
    <subcellularLocation>
        <location evidence="1">Cytoplasm</location>
    </subcellularLocation>
</comment>
<comment type="similarity">
    <text evidence="1">Belongs to the PRA-PH family.</text>
</comment>
<accession>Q0BPX5</accession>
<keyword id="KW-0028">Amino-acid biosynthesis</keyword>
<keyword id="KW-0067">ATP-binding</keyword>
<keyword id="KW-0963">Cytoplasm</keyword>
<keyword id="KW-0368">Histidine biosynthesis</keyword>
<keyword id="KW-0378">Hydrolase</keyword>
<keyword id="KW-0547">Nucleotide-binding</keyword>
<keyword id="KW-1185">Reference proteome</keyword>
<reference key="1">
    <citation type="journal article" date="2007" name="J. Bacteriol.">
        <title>Genome sequence analysis of the emerging human pathogenic acetic acid bacterium Granulibacter bethesdensis.</title>
        <authorList>
            <person name="Greenberg D.E."/>
            <person name="Porcella S.F."/>
            <person name="Zelazny A.M."/>
            <person name="Virtaneva K."/>
            <person name="Sturdevant D.E."/>
            <person name="Kupko J.J. III"/>
            <person name="Barbian K.D."/>
            <person name="Babar A."/>
            <person name="Dorward D.W."/>
            <person name="Holland S.M."/>
        </authorList>
    </citation>
    <scope>NUCLEOTIDE SEQUENCE [LARGE SCALE GENOMIC DNA]</scope>
    <source>
        <strain>ATCC BAA-1260 / CGDNIH1</strain>
    </source>
</reference>
<gene>
    <name evidence="1" type="primary">hisE</name>
    <name type="ordered locus">GbCGDNIH1_2229</name>
</gene>
<protein>
    <recommendedName>
        <fullName evidence="1">Phosphoribosyl-ATP pyrophosphatase</fullName>
        <shortName evidence="1">PRA-PH</shortName>
        <ecNumber evidence="1">3.6.1.31</ecNumber>
    </recommendedName>
</protein>
<evidence type="ECO:0000255" key="1">
    <source>
        <dbReference type="HAMAP-Rule" id="MF_01020"/>
    </source>
</evidence>
<feature type="chain" id="PRO_0000319647" description="Phosphoribosyl-ATP pyrophosphatase">
    <location>
        <begin position="1"/>
        <end position="160"/>
    </location>
</feature>
<organism>
    <name type="scientific">Granulibacter bethesdensis (strain ATCC BAA-1260 / CGDNIH1)</name>
    <dbReference type="NCBI Taxonomy" id="391165"/>
    <lineage>
        <taxon>Bacteria</taxon>
        <taxon>Pseudomonadati</taxon>
        <taxon>Pseudomonadota</taxon>
        <taxon>Alphaproteobacteria</taxon>
        <taxon>Acetobacterales</taxon>
        <taxon>Acetobacteraceae</taxon>
        <taxon>Granulibacter</taxon>
    </lineage>
</organism>
<proteinExistence type="inferred from homology"/>